<accession>Q5N1G5</accession>
<proteinExistence type="inferred from homology"/>
<feature type="chain" id="PRO_0000272555" description="Phosphate import ATP-binding protein PstB">
    <location>
        <begin position="1"/>
        <end position="264"/>
    </location>
</feature>
<feature type="domain" description="ABC transporter" evidence="1">
    <location>
        <begin position="11"/>
        <end position="250"/>
    </location>
</feature>
<feature type="binding site" evidence="1">
    <location>
        <begin position="43"/>
        <end position="50"/>
    </location>
    <ligand>
        <name>ATP</name>
        <dbReference type="ChEBI" id="CHEBI:30616"/>
    </ligand>
</feature>
<name>PSTB_SYNP6</name>
<reference key="1">
    <citation type="journal article" date="2007" name="Photosyn. Res.">
        <title>Complete nucleotide sequence of the freshwater unicellular cyanobacterium Synechococcus elongatus PCC 6301 chromosome: gene content and organization.</title>
        <authorList>
            <person name="Sugita C."/>
            <person name="Ogata K."/>
            <person name="Shikata M."/>
            <person name="Jikuya H."/>
            <person name="Takano J."/>
            <person name="Furumichi M."/>
            <person name="Kanehisa M."/>
            <person name="Omata T."/>
            <person name="Sugiura M."/>
            <person name="Sugita M."/>
        </authorList>
    </citation>
    <scope>NUCLEOTIDE SEQUENCE [LARGE SCALE GENOMIC DNA]</scope>
    <source>
        <strain>ATCC 27144 / PCC 6301 / SAUG 1402/1</strain>
    </source>
</reference>
<protein>
    <recommendedName>
        <fullName evidence="1">Phosphate import ATP-binding protein PstB</fullName>
        <ecNumber evidence="1">7.3.2.1</ecNumber>
    </recommendedName>
    <alternativeName>
        <fullName evidence="1">ABC phosphate transporter</fullName>
    </alternativeName>
    <alternativeName>
        <fullName evidence="1">Phosphate-transporting ATPase</fullName>
    </alternativeName>
</protein>
<gene>
    <name evidence="1" type="primary">pstB</name>
    <name type="ordered locus">syc1665_d</name>
</gene>
<sequence>MSPTAGENILLKAEALSVYYGNSLAVKDVYLEVLKNKIVAFIGPSGCGKSTILRCFNRMNDLINGCRVQGRITFHDQEINDGRVDAVELRSRIGMVFQKPNPFPKSIYENIAYGARINGYQGDMDELVEKSLRQAALWDEVKDKLKDSGLALSGGQQQRLCIARTVAVQPEVILMDEPCSALDPISTLAIEELMQTLKEQYTIIIVTHNMQQASRTSDYTAFFNARATEGGGKMGYLVEFDTTEKIFDSPDQEATADYVSGRFG</sequence>
<evidence type="ECO:0000255" key="1">
    <source>
        <dbReference type="HAMAP-Rule" id="MF_01702"/>
    </source>
</evidence>
<keyword id="KW-0067">ATP-binding</keyword>
<keyword id="KW-0997">Cell inner membrane</keyword>
<keyword id="KW-1003">Cell membrane</keyword>
<keyword id="KW-0472">Membrane</keyword>
<keyword id="KW-0547">Nucleotide-binding</keyword>
<keyword id="KW-0592">Phosphate transport</keyword>
<keyword id="KW-1278">Translocase</keyword>
<keyword id="KW-0813">Transport</keyword>
<organism>
    <name type="scientific">Synechococcus sp. (strain ATCC 27144 / PCC 6301 / SAUG 1402/1)</name>
    <name type="common">Anacystis nidulans</name>
    <dbReference type="NCBI Taxonomy" id="269084"/>
    <lineage>
        <taxon>Bacteria</taxon>
        <taxon>Bacillati</taxon>
        <taxon>Cyanobacteriota</taxon>
        <taxon>Cyanophyceae</taxon>
        <taxon>Synechococcales</taxon>
        <taxon>Synechococcaceae</taxon>
        <taxon>Synechococcus</taxon>
    </lineage>
</organism>
<dbReference type="EC" id="7.3.2.1" evidence="1"/>
<dbReference type="EMBL" id="AP008231">
    <property type="protein sequence ID" value="BAD79855.1"/>
    <property type="molecule type" value="Genomic_DNA"/>
</dbReference>
<dbReference type="RefSeq" id="WP_011243975.1">
    <property type="nucleotide sequence ID" value="NC_006576.1"/>
</dbReference>
<dbReference type="SMR" id="Q5N1G5"/>
<dbReference type="KEGG" id="syc:syc1665_d"/>
<dbReference type="eggNOG" id="COG1117">
    <property type="taxonomic scope" value="Bacteria"/>
</dbReference>
<dbReference type="Proteomes" id="UP000001175">
    <property type="component" value="Chromosome"/>
</dbReference>
<dbReference type="GO" id="GO:0005886">
    <property type="term" value="C:plasma membrane"/>
    <property type="evidence" value="ECO:0007669"/>
    <property type="project" value="UniProtKB-SubCell"/>
</dbReference>
<dbReference type="GO" id="GO:0005524">
    <property type="term" value="F:ATP binding"/>
    <property type="evidence" value="ECO:0007669"/>
    <property type="project" value="UniProtKB-KW"/>
</dbReference>
<dbReference type="GO" id="GO:0016887">
    <property type="term" value="F:ATP hydrolysis activity"/>
    <property type="evidence" value="ECO:0007669"/>
    <property type="project" value="InterPro"/>
</dbReference>
<dbReference type="GO" id="GO:0015415">
    <property type="term" value="F:ATPase-coupled phosphate ion transmembrane transporter activity"/>
    <property type="evidence" value="ECO:0007669"/>
    <property type="project" value="UniProtKB-EC"/>
</dbReference>
<dbReference type="GO" id="GO:0035435">
    <property type="term" value="P:phosphate ion transmembrane transport"/>
    <property type="evidence" value="ECO:0007669"/>
    <property type="project" value="InterPro"/>
</dbReference>
<dbReference type="CDD" id="cd03260">
    <property type="entry name" value="ABC_PstB_phosphate_transporter"/>
    <property type="match status" value="1"/>
</dbReference>
<dbReference type="Gene3D" id="3.40.50.300">
    <property type="entry name" value="P-loop containing nucleotide triphosphate hydrolases"/>
    <property type="match status" value="1"/>
</dbReference>
<dbReference type="InterPro" id="IPR003593">
    <property type="entry name" value="AAA+_ATPase"/>
</dbReference>
<dbReference type="InterPro" id="IPR003439">
    <property type="entry name" value="ABC_transporter-like_ATP-bd"/>
</dbReference>
<dbReference type="InterPro" id="IPR017871">
    <property type="entry name" value="ABC_transporter-like_CS"/>
</dbReference>
<dbReference type="InterPro" id="IPR027417">
    <property type="entry name" value="P-loop_NTPase"/>
</dbReference>
<dbReference type="InterPro" id="IPR005670">
    <property type="entry name" value="PstB-like"/>
</dbReference>
<dbReference type="NCBIfam" id="TIGR00972">
    <property type="entry name" value="3a0107s01c2"/>
    <property type="match status" value="1"/>
</dbReference>
<dbReference type="PANTHER" id="PTHR43423">
    <property type="entry name" value="ABC TRANSPORTER I FAMILY MEMBER 17"/>
    <property type="match status" value="1"/>
</dbReference>
<dbReference type="PANTHER" id="PTHR43423:SF1">
    <property type="entry name" value="ABC TRANSPORTER I FAMILY MEMBER 17"/>
    <property type="match status" value="1"/>
</dbReference>
<dbReference type="Pfam" id="PF00005">
    <property type="entry name" value="ABC_tran"/>
    <property type="match status" value="1"/>
</dbReference>
<dbReference type="SMART" id="SM00382">
    <property type="entry name" value="AAA"/>
    <property type="match status" value="1"/>
</dbReference>
<dbReference type="SUPFAM" id="SSF52540">
    <property type="entry name" value="P-loop containing nucleoside triphosphate hydrolases"/>
    <property type="match status" value="1"/>
</dbReference>
<dbReference type="PROSITE" id="PS00211">
    <property type="entry name" value="ABC_TRANSPORTER_1"/>
    <property type="match status" value="1"/>
</dbReference>
<dbReference type="PROSITE" id="PS50893">
    <property type="entry name" value="ABC_TRANSPORTER_2"/>
    <property type="match status" value="1"/>
</dbReference>
<dbReference type="PROSITE" id="PS51238">
    <property type="entry name" value="PSTB"/>
    <property type="match status" value="1"/>
</dbReference>
<comment type="function">
    <text evidence="1">Part of the ABC transporter complex PstSACB involved in phosphate import. Responsible for energy coupling to the transport system.</text>
</comment>
<comment type="catalytic activity">
    <reaction evidence="1">
        <text>phosphate(out) + ATP + H2O = ADP + 2 phosphate(in) + H(+)</text>
        <dbReference type="Rhea" id="RHEA:24440"/>
        <dbReference type="ChEBI" id="CHEBI:15377"/>
        <dbReference type="ChEBI" id="CHEBI:15378"/>
        <dbReference type="ChEBI" id="CHEBI:30616"/>
        <dbReference type="ChEBI" id="CHEBI:43474"/>
        <dbReference type="ChEBI" id="CHEBI:456216"/>
        <dbReference type="EC" id="7.3.2.1"/>
    </reaction>
</comment>
<comment type="subunit">
    <text evidence="1">The complex is composed of two ATP-binding proteins (PstB), two transmembrane proteins (PstC and PstA) and a solute-binding protein (PstS).</text>
</comment>
<comment type="subcellular location">
    <subcellularLocation>
        <location evidence="1">Cell inner membrane</location>
        <topology evidence="1">Peripheral membrane protein</topology>
    </subcellularLocation>
</comment>
<comment type="similarity">
    <text evidence="1">Belongs to the ABC transporter superfamily. Phosphate importer (TC 3.A.1.7) family.</text>
</comment>